<organism>
    <name type="scientific">Wolinella succinogenes (strain ATCC 29543 / DSM 1740 / CCUG 13145 / JCM 31913 / LMG 7466 / NCTC 11488 / FDC 602W)</name>
    <name type="common">Vibrio succinogenes</name>
    <dbReference type="NCBI Taxonomy" id="273121"/>
    <lineage>
        <taxon>Bacteria</taxon>
        <taxon>Pseudomonadati</taxon>
        <taxon>Campylobacterota</taxon>
        <taxon>Epsilonproteobacteria</taxon>
        <taxon>Campylobacterales</taxon>
        <taxon>Helicobacteraceae</taxon>
        <taxon>Wolinella</taxon>
    </lineage>
</organism>
<accession>Q7M8P7</accession>
<evidence type="ECO:0000255" key="1">
    <source>
        <dbReference type="HAMAP-Rule" id="MF_01694"/>
    </source>
</evidence>
<evidence type="ECO:0000255" key="2">
    <source>
        <dbReference type="PROSITE-ProRule" id="PRU01266"/>
    </source>
</evidence>
<proteinExistence type="inferred from homology"/>
<feature type="chain" id="PRO_0000381705" description="Biotin synthase">
    <location>
        <begin position="1"/>
        <end position="279"/>
    </location>
</feature>
<feature type="domain" description="Radical SAM core" evidence="2">
    <location>
        <begin position="1"/>
        <end position="228"/>
    </location>
</feature>
<feature type="binding site" evidence="1">
    <location>
        <position position="17"/>
    </location>
    <ligand>
        <name>[4Fe-4S] cluster</name>
        <dbReference type="ChEBI" id="CHEBI:49883"/>
        <note>4Fe-4S-S-AdoMet</note>
    </ligand>
</feature>
<feature type="binding site" evidence="1">
    <location>
        <position position="21"/>
    </location>
    <ligand>
        <name>[4Fe-4S] cluster</name>
        <dbReference type="ChEBI" id="CHEBI:49883"/>
        <note>4Fe-4S-S-AdoMet</note>
    </ligand>
</feature>
<feature type="binding site" evidence="1">
    <location>
        <position position="24"/>
    </location>
    <ligand>
        <name>[4Fe-4S] cluster</name>
        <dbReference type="ChEBI" id="CHEBI:49883"/>
        <note>4Fe-4S-S-AdoMet</note>
    </ligand>
</feature>
<feature type="binding site" evidence="1">
    <location>
        <position position="61"/>
    </location>
    <ligand>
        <name>[2Fe-2S] cluster</name>
        <dbReference type="ChEBI" id="CHEBI:190135"/>
    </ligand>
</feature>
<feature type="binding site" evidence="1">
    <location>
        <position position="96"/>
    </location>
    <ligand>
        <name>[2Fe-2S] cluster</name>
        <dbReference type="ChEBI" id="CHEBI:190135"/>
    </ligand>
</feature>
<feature type="binding site" evidence="1">
    <location>
        <position position="154"/>
    </location>
    <ligand>
        <name>[2Fe-2S] cluster</name>
        <dbReference type="ChEBI" id="CHEBI:190135"/>
    </ligand>
</feature>
<feature type="binding site" evidence="1">
    <location>
        <position position="221"/>
    </location>
    <ligand>
        <name>[2Fe-2S] cluster</name>
        <dbReference type="ChEBI" id="CHEBI:190135"/>
    </ligand>
</feature>
<comment type="function">
    <text evidence="1">Catalyzes the conversion of dethiobiotin (DTB) to biotin by the insertion of a sulfur atom into dethiobiotin via a radical-based mechanism.</text>
</comment>
<comment type="catalytic activity">
    <reaction evidence="1">
        <text>(4R,5S)-dethiobiotin + (sulfur carrier)-SH + 2 reduced [2Fe-2S]-[ferredoxin] + 2 S-adenosyl-L-methionine = (sulfur carrier)-H + biotin + 2 5'-deoxyadenosine + 2 L-methionine + 2 oxidized [2Fe-2S]-[ferredoxin]</text>
        <dbReference type="Rhea" id="RHEA:22060"/>
        <dbReference type="Rhea" id="RHEA-COMP:10000"/>
        <dbReference type="Rhea" id="RHEA-COMP:10001"/>
        <dbReference type="Rhea" id="RHEA-COMP:14737"/>
        <dbReference type="Rhea" id="RHEA-COMP:14739"/>
        <dbReference type="ChEBI" id="CHEBI:17319"/>
        <dbReference type="ChEBI" id="CHEBI:29917"/>
        <dbReference type="ChEBI" id="CHEBI:33737"/>
        <dbReference type="ChEBI" id="CHEBI:33738"/>
        <dbReference type="ChEBI" id="CHEBI:57586"/>
        <dbReference type="ChEBI" id="CHEBI:57844"/>
        <dbReference type="ChEBI" id="CHEBI:59789"/>
        <dbReference type="ChEBI" id="CHEBI:64428"/>
        <dbReference type="ChEBI" id="CHEBI:149473"/>
        <dbReference type="EC" id="2.8.1.6"/>
    </reaction>
</comment>
<comment type="cofactor">
    <cofactor evidence="1">
        <name>[4Fe-4S] cluster</name>
        <dbReference type="ChEBI" id="CHEBI:49883"/>
    </cofactor>
    <text evidence="1">Binds 1 [4Fe-4S] cluster. The cluster is coordinated with 3 cysteines and an exchangeable S-adenosyl-L-methionine.</text>
</comment>
<comment type="cofactor">
    <cofactor evidence="1">
        <name>[2Fe-2S] cluster</name>
        <dbReference type="ChEBI" id="CHEBI:190135"/>
    </cofactor>
    <text evidence="1">Binds 1 [2Fe-2S] cluster. The cluster is coordinated with 3 cysteines and 1 arginine.</text>
</comment>
<comment type="pathway">
    <text evidence="1">Cofactor biosynthesis; biotin biosynthesis; biotin from 7,8-diaminononanoate: step 2/2.</text>
</comment>
<comment type="subunit">
    <text evidence="1">Homodimer.</text>
</comment>
<comment type="similarity">
    <text evidence="1">Belongs to the radical SAM superfamily. Biotin synthase family.</text>
</comment>
<protein>
    <recommendedName>
        <fullName evidence="1">Biotin synthase</fullName>
        <ecNumber evidence="1">2.8.1.6</ecNumber>
    </recommendedName>
</protein>
<reference key="1">
    <citation type="journal article" date="2003" name="Proc. Natl. Acad. Sci. U.S.A.">
        <title>Complete genome sequence and analysis of Wolinella succinogenes.</title>
        <authorList>
            <person name="Baar C."/>
            <person name="Eppinger M."/>
            <person name="Raddatz G."/>
            <person name="Simon J."/>
            <person name="Lanz C."/>
            <person name="Klimmek O."/>
            <person name="Nandakumar R."/>
            <person name="Gross R."/>
            <person name="Rosinus A."/>
            <person name="Keller H."/>
            <person name="Jagtap P."/>
            <person name="Linke B."/>
            <person name="Meyer F."/>
            <person name="Lederer H."/>
            <person name="Schuster S.C."/>
        </authorList>
    </citation>
    <scope>NUCLEOTIDE SEQUENCE [LARGE SCALE GENOMIC DNA]</scope>
    <source>
        <strain>ATCC 29543 / DSM 1740 / CCUG 13145 / JCM 31913 / LMG 7466 / NCTC 11488 / FDC 602W</strain>
    </source>
</reference>
<keyword id="KW-0001">2Fe-2S</keyword>
<keyword id="KW-0004">4Fe-4S</keyword>
<keyword id="KW-0093">Biotin biosynthesis</keyword>
<keyword id="KW-0408">Iron</keyword>
<keyword id="KW-0411">Iron-sulfur</keyword>
<keyword id="KW-0479">Metal-binding</keyword>
<keyword id="KW-1185">Reference proteome</keyword>
<keyword id="KW-0949">S-adenosyl-L-methionine</keyword>
<keyword id="KW-0808">Transferase</keyword>
<gene>
    <name evidence="1" type="primary">bioB</name>
    <name type="ordered locus">WS1500</name>
</gene>
<name>BIOB_WOLSU</name>
<dbReference type="EC" id="2.8.1.6" evidence="1"/>
<dbReference type="EMBL" id="BX571661">
    <property type="protein sequence ID" value="CAE10552.1"/>
    <property type="molecule type" value="Genomic_DNA"/>
</dbReference>
<dbReference type="RefSeq" id="WP_011139336.1">
    <property type="nucleotide sequence ID" value="NC_005090.1"/>
</dbReference>
<dbReference type="SMR" id="Q7M8P7"/>
<dbReference type="STRING" id="273121.WS1500"/>
<dbReference type="KEGG" id="wsu:WS1500"/>
<dbReference type="eggNOG" id="COG0502">
    <property type="taxonomic scope" value="Bacteria"/>
</dbReference>
<dbReference type="HOGENOM" id="CLU_033172_2_1_7"/>
<dbReference type="UniPathway" id="UPA00078">
    <property type="reaction ID" value="UER00162"/>
</dbReference>
<dbReference type="Proteomes" id="UP000000422">
    <property type="component" value="Chromosome"/>
</dbReference>
<dbReference type="GO" id="GO:0051537">
    <property type="term" value="F:2 iron, 2 sulfur cluster binding"/>
    <property type="evidence" value="ECO:0007669"/>
    <property type="project" value="UniProtKB-KW"/>
</dbReference>
<dbReference type="GO" id="GO:0051539">
    <property type="term" value="F:4 iron, 4 sulfur cluster binding"/>
    <property type="evidence" value="ECO:0007669"/>
    <property type="project" value="UniProtKB-KW"/>
</dbReference>
<dbReference type="GO" id="GO:0004076">
    <property type="term" value="F:biotin synthase activity"/>
    <property type="evidence" value="ECO:0007669"/>
    <property type="project" value="UniProtKB-UniRule"/>
</dbReference>
<dbReference type="GO" id="GO:0005506">
    <property type="term" value="F:iron ion binding"/>
    <property type="evidence" value="ECO:0007669"/>
    <property type="project" value="UniProtKB-UniRule"/>
</dbReference>
<dbReference type="GO" id="GO:0009102">
    <property type="term" value="P:biotin biosynthetic process"/>
    <property type="evidence" value="ECO:0007669"/>
    <property type="project" value="UniProtKB-UniRule"/>
</dbReference>
<dbReference type="CDD" id="cd01335">
    <property type="entry name" value="Radical_SAM"/>
    <property type="match status" value="1"/>
</dbReference>
<dbReference type="Gene3D" id="3.20.20.70">
    <property type="entry name" value="Aldolase class I"/>
    <property type="match status" value="1"/>
</dbReference>
<dbReference type="HAMAP" id="MF_01694">
    <property type="entry name" value="BioB"/>
    <property type="match status" value="1"/>
</dbReference>
<dbReference type="InterPro" id="IPR013785">
    <property type="entry name" value="Aldolase_TIM"/>
</dbReference>
<dbReference type="InterPro" id="IPR010722">
    <property type="entry name" value="BATS_dom"/>
</dbReference>
<dbReference type="InterPro" id="IPR002684">
    <property type="entry name" value="Biotin_synth/BioAB"/>
</dbReference>
<dbReference type="InterPro" id="IPR024177">
    <property type="entry name" value="Biotin_synthase"/>
</dbReference>
<dbReference type="InterPro" id="IPR006638">
    <property type="entry name" value="Elp3/MiaA/NifB-like_rSAM"/>
</dbReference>
<dbReference type="InterPro" id="IPR007197">
    <property type="entry name" value="rSAM"/>
</dbReference>
<dbReference type="NCBIfam" id="TIGR00433">
    <property type="entry name" value="bioB"/>
    <property type="match status" value="1"/>
</dbReference>
<dbReference type="NCBIfam" id="NF006308">
    <property type="entry name" value="PRK08508.1"/>
    <property type="match status" value="1"/>
</dbReference>
<dbReference type="PANTHER" id="PTHR22976">
    <property type="entry name" value="BIOTIN SYNTHASE"/>
    <property type="match status" value="1"/>
</dbReference>
<dbReference type="PANTHER" id="PTHR22976:SF2">
    <property type="entry name" value="BIOTIN SYNTHASE, MITOCHONDRIAL"/>
    <property type="match status" value="1"/>
</dbReference>
<dbReference type="Pfam" id="PF06968">
    <property type="entry name" value="BATS"/>
    <property type="match status" value="1"/>
</dbReference>
<dbReference type="Pfam" id="PF04055">
    <property type="entry name" value="Radical_SAM"/>
    <property type="match status" value="1"/>
</dbReference>
<dbReference type="PIRSF" id="PIRSF001619">
    <property type="entry name" value="Biotin_synth"/>
    <property type="match status" value="1"/>
</dbReference>
<dbReference type="SFLD" id="SFLDG01278">
    <property type="entry name" value="biotin_synthase_like"/>
    <property type="match status" value="1"/>
</dbReference>
<dbReference type="SFLD" id="SFLDS00029">
    <property type="entry name" value="Radical_SAM"/>
    <property type="match status" value="1"/>
</dbReference>
<dbReference type="SMART" id="SM00876">
    <property type="entry name" value="BATS"/>
    <property type="match status" value="1"/>
</dbReference>
<dbReference type="SMART" id="SM00729">
    <property type="entry name" value="Elp3"/>
    <property type="match status" value="1"/>
</dbReference>
<dbReference type="SUPFAM" id="SSF102114">
    <property type="entry name" value="Radical SAM enzymes"/>
    <property type="match status" value="1"/>
</dbReference>
<dbReference type="PROSITE" id="PS51918">
    <property type="entry name" value="RADICAL_SAM"/>
    <property type="match status" value="1"/>
</dbReference>
<sequence>MKDIFLCSICNVSSGGCAEDCAYCTQSAKYRVDIEKYKQKSLENILEEARRARASGALGFCLVTAGRSLDSAKTAYISEAARSIKEAGLELHLIACCGSATKEALAELKKNGVDSYNHNLETAKSFFPKICTTHSWEERYETCESALEVGLGLCTGGIFGLGEGWSERLEFLHALQTLSPHSVPVNFYIPNPSLPLEVEALAQEEALECVRLAREYLPSARLMIAGGREKVFGQAQKPLFEAGINAVVLGDYLTTKGNRPSEDIAMIRSFGFEIAEACH</sequence>